<evidence type="ECO:0000255" key="1">
    <source>
        <dbReference type="HAMAP-Rule" id="MF_00189"/>
    </source>
</evidence>
<comment type="function">
    <text evidence="1">Plays a role in cell envelope biogenesis, maintenance of cell envelope integrity and membrane homeostasis.</text>
</comment>
<comment type="subcellular location">
    <subcellularLocation>
        <location evidence="1">Cell inner membrane</location>
        <topology evidence="1">Multi-pass membrane protein</topology>
    </subcellularLocation>
</comment>
<comment type="similarity">
    <text evidence="1">Belongs to the YciB family.</text>
</comment>
<name>YCIB_NEIG1</name>
<dbReference type="EMBL" id="AE004969">
    <property type="protein sequence ID" value="AAW90286.1"/>
    <property type="molecule type" value="Genomic_DNA"/>
</dbReference>
<dbReference type="RefSeq" id="WP_010359130.1">
    <property type="nucleotide sequence ID" value="NC_002946.2"/>
</dbReference>
<dbReference type="RefSeq" id="YP_208698.1">
    <property type="nucleotide sequence ID" value="NC_002946.2"/>
</dbReference>
<dbReference type="STRING" id="242231.NGO_1659"/>
<dbReference type="KEGG" id="ngo:NGO_1659"/>
<dbReference type="PATRIC" id="fig|242231.10.peg.1977"/>
<dbReference type="HOGENOM" id="CLU_089554_2_0_4"/>
<dbReference type="Proteomes" id="UP000000535">
    <property type="component" value="Chromosome"/>
</dbReference>
<dbReference type="GO" id="GO:0005886">
    <property type="term" value="C:plasma membrane"/>
    <property type="evidence" value="ECO:0007669"/>
    <property type="project" value="UniProtKB-SubCell"/>
</dbReference>
<dbReference type="HAMAP" id="MF_00189">
    <property type="entry name" value="YciB"/>
    <property type="match status" value="1"/>
</dbReference>
<dbReference type="InterPro" id="IPR006008">
    <property type="entry name" value="YciB"/>
</dbReference>
<dbReference type="NCBIfam" id="TIGR00997">
    <property type="entry name" value="ispZ"/>
    <property type="match status" value="1"/>
</dbReference>
<dbReference type="NCBIfam" id="NF001325">
    <property type="entry name" value="PRK00259.1-3"/>
    <property type="match status" value="1"/>
</dbReference>
<dbReference type="PANTHER" id="PTHR36917:SF1">
    <property type="entry name" value="INNER MEMBRANE-SPANNING PROTEIN YCIB"/>
    <property type="match status" value="1"/>
</dbReference>
<dbReference type="PANTHER" id="PTHR36917">
    <property type="entry name" value="INTRACELLULAR SEPTATION PROTEIN A-RELATED"/>
    <property type="match status" value="1"/>
</dbReference>
<dbReference type="Pfam" id="PF04279">
    <property type="entry name" value="IspA"/>
    <property type="match status" value="1"/>
</dbReference>
<keyword id="KW-0997">Cell inner membrane</keyword>
<keyword id="KW-1003">Cell membrane</keyword>
<keyword id="KW-0472">Membrane</keyword>
<keyword id="KW-1185">Reference proteome</keyword>
<keyword id="KW-0812">Transmembrane</keyword>
<keyword id="KW-1133">Transmembrane helix</keyword>
<feature type="chain" id="PRO_1000021031" description="Inner membrane-spanning protein YciB">
    <location>
        <begin position="1"/>
        <end position="176"/>
    </location>
</feature>
<feature type="transmembrane region" description="Helical" evidence="1">
    <location>
        <begin position="23"/>
        <end position="43"/>
    </location>
</feature>
<feature type="transmembrane region" description="Helical" evidence="1">
    <location>
        <begin position="50"/>
        <end position="70"/>
    </location>
</feature>
<feature type="transmembrane region" description="Helical" evidence="1">
    <location>
        <begin position="74"/>
        <end position="94"/>
    </location>
</feature>
<feature type="transmembrane region" description="Helical" evidence="1">
    <location>
        <begin position="119"/>
        <end position="139"/>
    </location>
</feature>
<feature type="transmembrane region" description="Helical" evidence="1">
    <location>
        <begin position="150"/>
        <end position="170"/>
    </location>
</feature>
<sequence length="176" mass="19922">MKFVSDLLSVILFFATYTVTKNMIAAAAVALVAGVVQAAFLYWKHKRLDTMQWVGLVLIVVFGGATIVLGDSRFIMWKPTVLFWCGALFLLGSHLAGKNGLKASIGREIQLPDAVWGKLTYMWVGFLIFMGIANWFVFTRFEAQWVNYKMFGSTALMLFFFIIQGIYLSTYLKKED</sequence>
<accession>Q5F6A1</accession>
<proteinExistence type="inferred from homology"/>
<organism>
    <name type="scientific">Neisseria gonorrhoeae (strain ATCC 700825 / FA 1090)</name>
    <dbReference type="NCBI Taxonomy" id="242231"/>
    <lineage>
        <taxon>Bacteria</taxon>
        <taxon>Pseudomonadati</taxon>
        <taxon>Pseudomonadota</taxon>
        <taxon>Betaproteobacteria</taxon>
        <taxon>Neisseriales</taxon>
        <taxon>Neisseriaceae</taxon>
        <taxon>Neisseria</taxon>
    </lineage>
</organism>
<gene>
    <name evidence="1" type="primary">yciB</name>
    <name type="ordered locus">NGO_1659</name>
</gene>
<protein>
    <recommendedName>
        <fullName evidence="1">Inner membrane-spanning protein YciB</fullName>
    </recommendedName>
</protein>
<reference key="1">
    <citation type="submission" date="2003-03" db="EMBL/GenBank/DDBJ databases">
        <title>The complete genome sequence of Neisseria gonorrhoeae.</title>
        <authorList>
            <person name="Lewis L.A."/>
            <person name="Gillaspy A.F."/>
            <person name="McLaughlin R.E."/>
            <person name="Gipson M."/>
            <person name="Ducey T.F."/>
            <person name="Ownbey T."/>
            <person name="Hartman K."/>
            <person name="Nydick C."/>
            <person name="Carson M.B."/>
            <person name="Vaughn J."/>
            <person name="Thomson C."/>
            <person name="Song L."/>
            <person name="Lin S."/>
            <person name="Yuan X."/>
            <person name="Najar F."/>
            <person name="Zhan M."/>
            <person name="Ren Q."/>
            <person name="Zhu H."/>
            <person name="Qi S."/>
            <person name="Kenton S.M."/>
            <person name="Lai H."/>
            <person name="White J.D."/>
            <person name="Clifton S."/>
            <person name="Roe B.A."/>
            <person name="Dyer D.W."/>
        </authorList>
    </citation>
    <scope>NUCLEOTIDE SEQUENCE [LARGE SCALE GENOMIC DNA]</scope>
    <source>
        <strain>ATCC 700825 / FA 1090</strain>
    </source>
</reference>